<accession>O67438</accession>
<organism>
    <name type="scientific">Aquifex aeolicus (strain VF5)</name>
    <dbReference type="NCBI Taxonomy" id="224324"/>
    <lineage>
        <taxon>Bacteria</taxon>
        <taxon>Pseudomonadati</taxon>
        <taxon>Aquificota</taxon>
        <taxon>Aquificia</taxon>
        <taxon>Aquificales</taxon>
        <taxon>Aquificaceae</taxon>
        <taxon>Aquifex</taxon>
    </lineage>
</organism>
<dbReference type="EMBL" id="AE000657">
    <property type="protein sequence ID" value="AAC07403.1"/>
    <property type="molecule type" value="Genomic_DNA"/>
</dbReference>
<dbReference type="PIR" id="D70426">
    <property type="entry name" value="D70426"/>
</dbReference>
<dbReference type="RefSeq" id="NP_214003.1">
    <property type="nucleotide sequence ID" value="NC_000918.1"/>
</dbReference>
<dbReference type="RefSeq" id="WP_010880941.1">
    <property type="nucleotide sequence ID" value="NC_000918.1"/>
</dbReference>
<dbReference type="STRING" id="224324.aq_1453"/>
<dbReference type="EnsemblBacteria" id="AAC07403">
    <property type="protein sequence ID" value="AAC07403"/>
    <property type="gene ID" value="aq_1453"/>
</dbReference>
<dbReference type="KEGG" id="aae:aq_1453"/>
<dbReference type="eggNOG" id="COG3287">
    <property type="taxonomic scope" value="Bacteria"/>
</dbReference>
<dbReference type="HOGENOM" id="CLU_1029130_0_0_0"/>
<dbReference type="InParanoid" id="O67438"/>
<dbReference type="OrthoDB" id="11791at2"/>
<dbReference type="Proteomes" id="UP000000798">
    <property type="component" value="Chromosome"/>
</dbReference>
<dbReference type="InterPro" id="IPR013702">
    <property type="entry name" value="FIST_domain_N"/>
</dbReference>
<dbReference type="Pfam" id="PF08495">
    <property type="entry name" value="FIST"/>
    <property type="match status" value="1"/>
</dbReference>
<gene>
    <name type="ordered locus">aq_1453</name>
</gene>
<reference key="1">
    <citation type="journal article" date="1998" name="Nature">
        <title>The complete genome of the hyperthermophilic bacterium Aquifex aeolicus.</title>
        <authorList>
            <person name="Deckert G."/>
            <person name="Warren P.V."/>
            <person name="Gaasterland T."/>
            <person name="Young W.G."/>
            <person name="Lenox A.L."/>
            <person name="Graham D.E."/>
            <person name="Overbeek R."/>
            <person name="Snead M.A."/>
            <person name="Keller M."/>
            <person name="Aujay M."/>
            <person name="Huber R."/>
            <person name="Feldman R.A."/>
            <person name="Short J.M."/>
            <person name="Olsen G.J."/>
            <person name="Swanson R.V."/>
        </authorList>
    </citation>
    <scope>NUCLEOTIDE SEQUENCE [LARGE SCALE GENOMIC DNA]</scope>
    <source>
        <strain>VF5</strain>
    </source>
</reference>
<proteinExistence type="predicted"/>
<protein>
    <recommendedName>
        <fullName>Uncharacterized protein aq_1453</fullName>
    </recommendedName>
</protein>
<feature type="chain" id="PRO_0000186928" description="Uncharacterized protein aq_1453">
    <location>
        <begin position="1"/>
        <end position="270"/>
    </location>
</feature>
<sequence length="270" mass="31469">MKCVVYGSKSPVLHQALEEVKRKFLEEKILTDFDFMIISLNYKYPYENLHRDLVKIFDISSDAYFGFHSTETIEETEIHDGLAVCFIKFENRGRLKVYWDSGISDYMSNGLLQRLVEYLEENKNNLNVFFSAWEDKNLGLFIEDLGRILGQKGFYPNLVGGVSSGRKFNGELRTFQFYKGKVIKDGFGILTFENVEFTLGISLGFKPISPIYEVRKADNYKVYEVDSRVPFKRIVENFLTGLEKKIEYLWYCPIVLVEERRGIRKGAENL</sequence>
<name>Y1453_AQUAE</name>
<keyword id="KW-1185">Reference proteome</keyword>